<feature type="chain" id="PRO_0000220247" description="Homogentisate 1,2-dioxygenase">
    <location>
        <begin position="1"/>
        <end position="425"/>
    </location>
</feature>
<feature type="active site" description="Proton acceptor" evidence="1">
    <location>
        <position position="283"/>
    </location>
</feature>
<feature type="binding site" evidence="1">
    <location>
        <position position="326"/>
    </location>
    <ligand>
        <name>Fe cation</name>
        <dbReference type="ChEBI" id="CHEBI:24875"/>
    </ligand>
</feature>
<feature type="binding site" evidence="1">
    <location>
        <position position="332"/>
    </location>
    <ligand>
        <name>Fe cation</name>
        <dbReference type="ChEBI" id="CHEBI:24875"/>
    </ligand>
</feature>
<feature type="binding site" evidence="1">
    <location>
        <position position="341"/>
    </location>
    <ligand>
        <name>homogentisate</name>
        <dbReference type="ChEBI" id="CHEBI:16169"/>
    </ligand>
</feature>
<feature type="binding site" evidence="1">
    <location>
        <position position="362"/>
    </location>
    <ligand>
        <name>Fe cation</name>
        <dbReference type="ChEBI" id="CHEBI:24875"/>
    </ligand>
</feature>
<feature type="binding site" evidence="1">
    <location>
        <position position="362"/>
    </location>
    <ligand>
        <name>homogentisate</name>
        <dbReference type="ChEBI" id="CHEBI:16169"/>
    </ligand>
</feature>
<reference key="1">
    <citation type="journal article" date="2001" name="Proc. Natl. Acad. Sci. U.S.A.">
        <title>Complete genome sequence of Caulobacter crescentus.</title>
        <authorList>
            <person name="Nierman W.C."/>
            <person name="Feldblyum T.V."/>
            <person name="Laub M.T."/>
            <person name="Paulsen I.T."/>
            <person name="Nelson K.E."/>
            <person name="Eisen J.A."/>
            <person name="Heidelberg J.F."/>
            <person name="Alley M.R.K."/>
            <person name="Ohta N."/>
            <person name="Maddock J.R."/>
            <person name="Potocka I."/>
            <person name="Nelson W.C."/>
            <person name="Newton A."/>
            <person name="Stephens C."/>
            <person name="Phadke N.D."/>
            <person name="Ely B."/>
            <person name="DeBoy R.T."/>
            <person name="Dodson R.J."/>
            <person name="Durkin A.S."/>
            <person name="Gwinn M.L."/>
            <person name="Haft D.H."/>
            <person name="Kolonay J.F."/>
            <person name="Smit J."/>
            <person name="Craven M.B."/>
            <person name="Khouri H.M."/>
            <person name="Shetty J."/>
            <person name="Berry K.J."/>
            <person name="Utterback T.R."/>
            <person name="Tran K."/>
            <person name="Wolf A.M."/>
            <person name="Vamathevan J.J."/>
            <person name="Ermolaeva M.D."/>
            <person name="White O."/>
            <person name="Salzberg S.L."/>
            <person name="Venter J.C."/>
            <person name="Shapiro L."/>
            <person name="Fraser C.M."/>
        </authorList>
    </citation>
    <scope>NUCLEOTIDE SEQUENCE [LARGE SCALE GENOMIC DNA]</scope>
    <source>
        <strain>ATCC 19089 / CIP 103742 / CB 15</strain>
    </source>
</reference>
<gene>
    <name evidence="1" type="primary">hmgA</name>
    <name type="ordered locus">CC_2532</name>
</gene>
<keyword id="KW-0223">Dioxygenase</keyword>
<keyword id="KW-0408">Iron</keyword>
<keyword id="KW-0479">Metal-binding</keyword>
<keyword id="KW-0560">Oxidoreductase</keyword>
<keyword id="KW-0585">Phenylalanine catabolism</keyword>
<keyword id="KW-1185">Reference proteome</keyword>
<keyword id="KW-0828">Tyrosine catabolism</keyword>
<dbReference type="EC" id="1.13.11.5" evidence="1"/>
<dbReference type="EMBL" id="AE005673">
    <property type="protein sequence ID" value="AAK24503.1"/>
    <property type="molecule type" value="Genomic_DNA"/>
</dbReference>
<dbReference type="PIR" id="C87563">
    <property type="entry name" value="C87563"/>
</dbReference>
<dbReference type="RefSeq" id="NP_421335.1">
    <property type="nucleotide sequence ID" value="NC_002696.2"/>
</dbReference>
<dbReference type="RefSeq" id="WP_010920389.1">
    <property type="nucleotide sequence ID" value="NC_002696.2"/>
</dbReference>
<dbReference type="SMR" id="Q9A5B8"/>
<dbReference type="STRING" id="190650.CC_2532"/>
<dbReference type="EnsemblBacteria" id="AAK24503">
    <property type="protein sequence ID" value="AAK24503"/>
    <property type="gene ID" value="CC_2532"/>
</dbReference>
<dbReference type="KEGG" id="ccr:CC_2532"/>
<dbReference type="PATRIC" id="fig|190650.5.peg.2546"/>
<dbReference type="eggNOG" id="COG3508">
    <property type="taxonomic scope" value="Bacteria"/>
</dbReference>
<dbReference type="HOGENOM" id="CLU_027174_0_0_5"/>
<dbReference type="BioCyc" id="CAULO:CC2532-MONOMER"/>
<dbReference type="UniPathway" id="UPA00139">
    <property type="reaction ID" value="UER00339"/>
</dbReference>
<dbReference type="Proteomes" id="UP000001816">
    <property type="component" value="Chromosome"/>
</dbReference>
<dbReference type="GO" id="GO:0005737">
    <property type="term" value="C:cytoplasm"/>
    <property type="evidence" value="ECO:0007669"/>
    <property type="project" value="TreeGrafter"/>
</dbReference>
<dbReference type="GO" id="GO:0004411">
    <property type="term" value="F:homogentisate 1,2-dioxygenase activity"/>
    <property type="evidence" value="ECO:0007669"/>
    <property type="project" value="UniProtKB-UniRule"/>
</dbReference>
<dbReference type="GO" id="GO:0005506">
    <property type="term" value="F:iron ion binding"/>
    <property type="evidence" value="ECO:0007669"/>
    <property type="project" value="UniProtKB-UniRule"/>
</dbReference>
<dbReference type="GO" id="GO:0006559">
    <property type="term" value="P:L-phenylalanine catabolic process"/>
    <property type="evidence" value="ECO:0007669"/>
    <property type="project" value="UniProtKB-UniRule"/>
</dbReference>
<dbReference type="GO" id="GO:0006572">
    <property type="term" value="P:tyrosine catabolic process"/>
    <property type="evidence" value="ECO:0007669"/>
    <property type="project" value="UniProtKB-UniRule"/>
</dbReference>
<dbReference type="CDD" id="cd07000">
    <property type="entry name" value="cupin_HGO_N"/>
    <property type="match status" value="1"/>
</dbReference>
<dbReference type="FunFam" id="2.60.120.10:FF:000034">
    <property type="entry name" value="Homogentisate 1,2-dioxygenase"/>
    <property type="match status" value="1"/>
</dbReference>
<dbReference type="Gene3D" id="2.60.120.10">
    <property type="entry name" value="Jelly Rolls"/>
    <property type="match status" value="2"/>
</dbReference>
<dbReference type="HAMAP" id="MF_00334">
    <property type="entry name" value="Homogentis_dioxygen"/>
    <property type="match status" value="1"/>
</dbReference>
<dbReference type="InterPro" id="IPR046451">
    <property type="entry name" value="HgmA_C"/>
</dbReference>
<dbReference type="InterPro" id="IPR046452">
    <property type="entry name" value="HgmA_N"/>
</dbReference>
<dbReference type="InterPro" id="IPR005708">
    <property type="entry name" value="Homogentis_dOase"/>
</dbReference>
<dbReference type="InterPro" id="IPR022950">
    <property type="entry name" value="Homogentis_dOase_bac"/>
</dbReference>
<dbReference type="InterPro" id="IPR014710">
    <property type="entry name" value="RmlC-like_jellyroll"/>
</dbReference>
<dbReference type="InterPro" id="IPR011051">
    <property type="entry name" value="RmlC_Cupin_sf"/>
</dbReference>
<dbReference type="NCBIfam" id="TIGR01015">
    <property type="entry name" value="hmgA"/>
    <property type="match status" value="1"/>
</dbReference>
<dbReference type="PANTHER" id="PTHR11056">
    <property type="entry name" value="HOMOGENTISATE 1,2-DIOXYGENASE"/>
    <property type="match status" value="1"/>
</dbReference>
<dbReference type="PANTHER" id="PTHR11056:SF0">
    <property type="entry name" value="HOMOGENTISATE 1,2-DIOXYGENASE"/>
    <property type="match status" value="1"/>
</dbReference>
<dbReference type="Pfam" id="PF04209">
    <property type="entry name" value="HgmA_C"/>
    <property type="match status" value="1"/>
</dbReference>
<dbReference type="Pfam" id="PF20510">
    <property type="entry name" value="HgmA_N"/>
    <property type="match status" value="1"/>
</dbReference>
<dbReference type="SUPFAM" id="SSF51182">
    <property type="entry name" value="RmlC-like cupins"/>
    <property type="match status" value="1"/>
</dbReference>
<evidence type="ECO:0000255" key="1">
    <source>
        <dbReference type="HAMAP-Rule" id="MF_00334"/>
    </source>
</evidence>
<comment type="function">
    <text evidence="1">Involved in the catabolism of homogentisate (2,5-dihydroxyphenylacetate or 2,5-OH-PhAc), a central intermediate in the degradation of phenylalanine and tyrosine. Catalyzes the oxidative ring cleavage of the aromatic ring of homogentisate to yield maleylacetoacetate.</text>
</comment>
<comment type="catalytic activity">
    <reaction evidence="1">
        <text>homogentisate + O2 = 4-maleylacetoacetate + H(+)</text>
        <dbReference type="Rhea" id="RHEA:15449"/>
        <dbReference type="ChEBI" id="CHEBI:15378"/>
        <dbReference type="ChEBI" id="CHEBI:15379"/>
        <dbReference type="ChEBI" id="CHEBI:16169"/>
        <dbReference type="ChEBI" id="CHEBI:17105"/>
        <dbReference type="EC" id="1.13.11.5"/>
    </reaction>
</comment>
<comment type="cofactor">
    <cofactor evidence="1">
        <name>Fe cation</name>
        <dbReference type="ChEBI" id="CHEBI:24875"/>
    </cofactor>
</comment>
<comment type="pathway">
    <text evidence="1">Amino-acid degradation; L-phenylalanine degradation; acetoacetate and fumarate from L-phenylalanine: step 4/6.</text>
</comment>
<comment type="subunit">
    <text evidence="1">Hexamer; dimer of trimers.</text>
</comment>
<comment type="similarity">
    <text evidence="1">Belongs to the homogentisate dioxygenase family.</text>
</comment>
<organism>
    <name type="scientific">Caulobacter vibrioides (strain ATCC 19089 / CIP 103742 / CB 15)</name>
    <name type="common">Caulobacter crescentus</name>
    <dbReference type="NCBI Taxonomy" id="190650"/>
    <lineage>
        <taxon>Bacteria</taxon>
        <taxon>Pseudomonadati</taxon>
        <taxon>Pseudomonadota</taxon>
        <taxon>Alphaproteobacteria</taxon>
        <taxon>Caulobacterales</taxon>
        <taxon>Caulobacteraceae</taxon>
        <taxon>Caulobacter</taxon>
    </lineage>
</organism>
<proteinExistence type="inferred from homology"/>
<name>HGD_CAUVC</name>
<protein>
    <recommendedName>
        <fullName evidence="1">Homogentisate 1,2-dioxygenase</fullName>
        <shortName evidence="1">HGDO</shortName>
        <ecNumber evidence="1">1.13.11.5</ecNumber>
    </recommendedName>
    <alternativeName>
        <fullName evidence="1">Homogentisate oxygenase</fullName>
    </alternativeName>
    <alternativeName>
        <fullName evidence="1">Homogentisic acid oxidase</fullName>
    </alternativeName>
    <alternativeName>
        <fullName evidence="1">Homogentisicase</fullName>
    </alternativeName>
</protein>
<accession>Q9A5B8</accession>
<sequence>MDLRYQTGFGSYFETEAHPGALPVGRNSPQKVPFGLYAEQLSGSAFTAPRHENRRTWLYRLRPSAGHEAYQPYAQDKLVSAFPGPATPNRLRWSPLEIPAAPTDFVDGLVSLAGNADAATLGGIAAHVYLVNVSMKNRVFYNADGEMLIVPQMGELTLVTEMGVLKAGPGHIAVIPRGVRFRVEVEGPARGYVCENYGAAFRLPELGPIGANGLANPRDFEAPVAAFEDIDTPTQVIQKFQGALWAATWDHSPLDVVAWHGNLTPYRYDLSRFNTINTVSYDHPDPSIFTVLTSPSDTPGTANCDFVIFPPRWMVAEDTFRPPWFHRNVMSEFMGLIHGAYDAKAGGFVPGGASLHNCMSDHGPDVASHKKATEVVLAPHKIDGTMAFMFESRWVFRPTHLALESAALQSDYDACWTGFPKARLS</sequence>